<keyword id="KW-0028">Amino-acid biosynthesis</keyword>
<keyword id="KW-0055">Arginine biosynthesis</keyword>
<keyword id="KW-0963">Cytoplasm</keyword>
<keyword id="KW-0238">DNA-binding</keyword>
<keyword id="KW-0678">Repressor</keyword>
<keyword id="KW-0804">Transcription</keyword>
<keyword id="KW-0805">Transcription regulation</keyword>
<dbReference type="EMBL" id="CR626927">
    <property type="protein sequence ID" value="CAH06242.1"/>
    <property type="molecule type" value="Genomic_DNA"/>
</dbReference>
<dbReference type="RefSeq" id="WP_005784402.1">
    <property type="nucleotide sequence ID" value="NZ_UFTH01000001.1"/>
</dbReference>
<dbReference type="SMR" id="Q5LHY8"/>
<dbReference type="PaxDb" id="272559-BF9343_0463"/>
<dbReference type="KEGG" id="bfs:BF9343_0463"/>
<dbReference type="eggNOG" id="COG1438">
    <property type="taxonomic scope" value="Bacteria"/>
</dbReference>
<dbReference type="HOGENOM" id="CLU_097103_0_0_10"/>
<dbReference type="UniPathway" id="UPA00068"/>
<dbReference type="Proteomes" id="UP000006731">
    <property type="component" value="Chromosome"/>
</dbReference>
<dbReference type="GO" id="GO:0005737">
    <property type="term" value="C:cytoplasm"/>
    <property type="evidence" value="ECO:0007669"/>
    <property type="project" value="UniProtKB-SubCell"/>
</dbReference>
<dbReference type="GO" id="GO:0034618">
    <property type="term" value="F:arginine binding"/>
    <property type="evidence" value="ECO:0007669"/>
    <property type="project" value="InterPro"/>
</dbReference>
<dbReference type="GO" id="GO:0003677">
    <property type="term" value="F:DNA binding"/>
    <property type="evidence" value="ECO:0007669"/>
    <property type="project" value="UniProtKB-KW"/>
</dbReference>
<dbReference type="GO" id="GO:0003700">
    <property type="term" value="F:DNA-binding transcription factor activity"/>
    <property type="evidence" value="ECO:0007669"/>
    <property type="project" value="UniProtKB-UniRule"/>
</dbReference>
<dbReference type="GO" id="GO:0006526">
    <property type="term" value="P:L-arginine biosynthetic process"/>
    <property type="evidence" value="ECO:0007669"/>
    <property type="project" value="UniProtKB-UniPathway"/>
</dbReference>
<dbReference type="GO" id="GO:0051259">
    <property type="term" value="P:protein complex oligomerization"/>
    <property type="evidence" value="ECO:0007669"/>
    <property type="project" value="InterPro"/>
</dbReference>
<dbReference type="GO" id="GO:1900079">
    <property type="term" value="P:regulation of arginine biosynthetic process"/>
    <property type="evidence" value="ECO:0007669"/>
    <property type="project" value="UniProtKB-UniRule"/>
</dbReference>
<dbReference type="Gene3D" id="3.30.1360.40">
    <property type="match status" value="1"/>
</dbReference>
<dbReference type="Gene3D" id="1.10.10.10">
    <property type="entry name" value="Winged helix-like DNA-binding domain superfamily/Winged helix DNA-binding domain"/>
    <property type="match status" value="1"/>
</dbReference>
<dbReference type="HAMAP" id="MF_00173">
    <property type="entry name" value="Arg_repressor"/>
    <property type="match status" value="1"/>
</dbReference>
<dbReference type="InterPro" id="IPR001669">
    <property type="entry name" value="Arg_repress"/>
</dbReference>
<dbReference type="InterPro" id="IPR020899">
    <property type="entry name" value="Arg_repress_C"/>
</dbReference>
<dbReference type="InterPro" id="IPR036251">
    <property type="entry name" value="Arg_repress_C_sf"/>
</dbReference>
<dbReference type="InterPro" id="IPR020900">
    <property type="entry name" value="Arg_repress_DNA-bd"/>
</dbReference>
<dbReference type="InterPro" id="IPR036388">
    <property type="entry name" value="WH-like_DNA-bd_sf"/>
</dbReference>
<dbReference type="InterPro" id="IPR036390">
    <property type="entry name" value="WH_DNA-bd_sf"/>
</dbReference>
<dbReference type="PANTHER" id="PTHR34471">
    <property type="entry name" value="ARGININE REPRESSOR"/>
    <property type="match status" value="1"/>
</dbReference>
<dbReference type="PANTHER" id="PTHR34471:SF1">
    <property type="entry name" value="ARGININE REPRESSOR"/>
    <property type="match status" value="1"/>
</dbReference>
<dbReference type="Pfam" id="PF01316">
    <property type="entry name" value="Arg_repressor"/>
    <property type="match status" value="1"/>
</dbReference>
<dbReference type="Pfam" id="PF02863">
    <property type="entry name" value="Arg_repressor_C"/>
    <property type="match status" value="1"/>
</dbReference>
<dbReference type="PRINTS" id="PR01467">
    <property type="entry name" value="ARGREPRESSOR"/>
</dbReference>
<dbReference type="SUPFAM" id="SSF55252">
    <property type="entry name" value="C-terminal domain of arginine repressor"/>
    <property type="match status" value="1"/>
</dbReference>
<dbReference type="SUPFAM" id="SSF46785">
    <property type="entry name" value="Winged helix' DNA-binding domain"/>
    <property type="match status" value="1"/>
</dbReference>
<sequence>MKKKANRLDAIKMIISSKEVGSQEELLQELGQEGFELTQATLSRDLKQLKVAKAASMNGRYVYVLPNDIMYKRVGDQSASEMLMNNGFISLQFSGNIAVIKTRPGYASSMAYDIDNRESDTILGTIAGDDTIMLVLREGATPTAVRHFLSLIIPNIN</sequence>
<reference key="1">
    <citation type="journal article" date="2005" name="Science">
        <title>Extensive DNA inversions in the B. fragilis genome control variable gene expression.</title>
        <authorList>
            <person name="Cerdeno-Tarraga A.-M."/>
            <person name="Patrick S."/>
            <person name="Crossman L.C."/>
            <person name="Blakely G."/>
            <person name="Abratt V."/>
            <person name="Lennard N."/>
            <person name="Poxton I."/>
            <person name="Duerden B."/>
            <person name="Harris B."/>
            <person name="Quail M.A."/>
            <person name="Barron A."/>
            <person name="Clark L."/>
            <person name="Corton C."/>
            <person name="Doggett J."/>
            <person name="Holden M.T.G."/>
            <person name="Larke N."/>
            <person name="Line A."/>
            <person name="Lord A."/>
            <person name="Norbertczak H."/>
            <person name="Ormond D."/>
            <person name="Price C."/>
            <person name="Rabbinowitsch E."/>
            <person name="Woodward J."/>
            <person name="Barrell B.G."/>
            <person name="Parkhill J."/>
        </authorList>
    </citation>
    <scope>NUCLEOTIDE SEQUENCE [LARGE SCALE GENOMIC DNA]</scope>
    <source>
        <strain>ATCC 25285 / DSM 2151 / CCUG 4856 / JCM 11019 / LMG 10263 / NCTC 9343 / Onslow / VPI 2553 / EN-2</strain>
    </source>
</reference>
<protein>
    <recommendedName>
        <fullName evidence="1">Arginine repressor</fullName>
    </recommendedName>
</protein>
<feature type="chain" id="PRO_1000023546" description="Arginine repressor">
    <location>
        <begin position="1"/>
        <end position="157"/>
    </location>
</feature>
<accession>Q5LHY8</accession>
<comment type="function">
    <text evidence="1">Regulates arginine biosynthesis genes.</text>
</comment>
<comment type="pathway">
    <text>Amino-acid biosynthesis; L-arginine biosynthesis [regulation].</text>
</comment>
<comment type="subcellular location">
    <subcellularLocation>
        <location evidence="1">Cytoplasm</location>
    </subcellularLocation>
</comment>
<comment type="similarity">
    <text evidence="1">Belongs to the ArgR family.</text>
</comment>
<name>ARGR_BACFN</name>
<gene>
    <name evidence="1" type="primary">argR</name>
    <name type="ordered locus">BF0483</name>
</gene>
<proteinExistence type="inferred from homology"/>
<organism>
    <name type="scientific">Bacteroides fragilis (strain ATCC 25285 / DSM 2151 / CCUG 4856 / JCM 11019 / LMG 10263 / NCTC 9343 / Onslow / VPI 2553 / EN-2)</name>
    <dbReference type="NCBI Taxonomy" id="272559"/>
    <lineage>
        <taxon>Bacteria</taxon>
        <taxon>Pseudomonadati</taxon>
        <taxon>Bacteroidota</taxon>
        <taxon>Bacteroidia</taxon>
        <taxon>Bacteroidales</taxon>
        <taxon>Bacteroidaceae</taxon>
        <taxon>Bacteroides</taxon>
    </lineage>
</organism>
<evidence type="ECO:0000255" key="1">
    <source>
        <dbReference type="HAMAP-Rule" id="MF_00173"/>
    </source>
</evidence>